<gene>
    <name evidence="1" type="primary">rsmJ</name>
    <name type="ordered locus">FTH_0288</name>
</gene>
<accession>Q0BNN3</accession>
<dbReference type="EC" id="2.1.1.242" evidence="1"/>
<dbReference type="EMBL" id="CP000437">
    <property type="protein sequence ID" value="ABI82301.1"/>
    <property type="molecule type" value="Genomic_DNA"/>
</dbReference>
<dbReference type="RefSeq" id="WP_003014447.1">
    <property type="nucleotide sequence ID" value="NC_017463.1"/>
</dbReference>
<dbReference type="SMR" id="Q0BNN3"/>
<dbReference type="KEGG" id="fth:FTH_0288"/>
<dbReference type="GO" id="GO:0005737">
    <property type="term" value="C:cytoplasm"/>
    <property type="evidence" value="ECO:0007669"/>
    <property type="project" value="UniProtKB-SubCell"/>
</dbReference>
<dbReference type="GO" id="GO:0008990">
    <property type="term" value="F:rRNA (guanine-N2-)-methyltransferase activity"/>
    <property type="evidence" value="ECO:0007669"/>
    <property type="project" value="UniProtKB-UniRule"/>
</dbReference>
<dbReference type="CDD" id="cd02440">
    <property type="entry name" value="AdoMet_MTases"/>
    <property type="match status" value="1"/>
</dbReference>
<dbReference type="Gene3D" id="3.40.50.150">
    <property type="entry name" value="Vaccinia Virus protein VP39"/>
    <property type="match status" value="1"/>
</dbReference>
<dbReference type="HAMAP" id="MF_01523">
    <property type="entry name" value="16SrRNA_methyltr_J"/>
    <property type="match status" value="1"/>
</dbReference>
<dbReference type="InterPro" id="IPR007536">
    <property type="entry name" value="16SrRNA_methylTrfase_J"/>
</dbReference>
<dbReference type="InterPro" id="IPR029063">
    <property type="entry name" value="SAM-dependent_MTases_sf"/>
</dbReference>
<dbReference type="PANTHER" id="PTHR36112">
    <property type="entry name" value="RIBOSOMAL RNA SMALL SUBUNIT METHYLTRANSFERASE J"/>
    <property type="match status" value="1"/>
</dbReference>
<dbReference type="PANTHER" id="PTHR36112:SF1">
    <property type="entry name" value="RIBOSOMAL RNA SMALL SUBUNIT METHYLTRANSFERASE J"/>
    <property type="match status" value="1"/>
</dbReference>
<dbReference type="Pfam" id="PF04445">
    <property type="entry name" value="SAM_MT"/>
    <property type="match status" value="1"/>
</dbReference>
<dbReference type="SUPFAM" id="SSF53335">
    <property type="entry name" value="S-adenosyl-L-methionine-dependent methyltransferases"/>
    <property type="match status" value="1"/>
</dbReference>
<evidence type="ECO:0000255" key="1">
    <source>
        <dbReference type="HAMAP-Rule" id="MF_01523"/>
    </source>
</evidence>
<feature type="chain" id="PRO_0000292631" description="Ribosomal RNA small subunit methyltransferase J">
    <location>
        <begin position="1"/>
        <end position="241"/>
    </location>
</feature>
<feature type="binding site" evidence="1">
    <location>
        <begin position="94"/>
        <end position="95"/>
    </location>
    <ligand>
        <name>S-adenosyl-L-methionine</name>
        <dbReference type="ChEBI" id="CHEBI:59789"/>
    </ligand>
</feature>
<feature type="binding site" evidence="1">
    <location>
        <position position="163"/>
    </location>
    <ligand>
        <name>S-adenosyl-L-methionine</name>
        <dbReference type="ChEBI" id="CHEBI:59789"/>
    </ligand>
</feature>
<proteinExistence type="inferred from homology"/>
<comment type="function">
    <text evidence="1">Specifically methylates the guanosine in position 1516 of 16S rRNA.</text>
</comment>
<comment type="catalytic activity">
    <reaction evidence="1">
        <text>guanosine(1516) in 16S rRNA + S-adenosyl-L-methionine = N(2)-methylguanosine(1516) in 16S rRNA + S-adenosyl-L-homocysteine + H(+)</text>
        <dbReference type="Rhea" id="RHEA:43220"/>
        <dbReference type="Rhea" id="RHEA-COMP:10412"/>
        <dbReference type="Rhea" id="RHEA-COMP:10413"/>
        <dbReference type="ChEBI" id="CHEBI:15378"/>
        <dbReference type="ChEBI" id="CHEBI:57856"/>
        <dbReference type="ChEBI" id="CHEBI:59789"/>
        <dbReference type="ChEBI" id="CHEBI:74269"/>
        <dbReference type="ChEBI" id="CHEBI:74481"/>
        <dbReference type="EC" id="2.1.1.242"/>
    </reaction>
</comment>
<comment type="subcellular location">
    <subcellularLocation>
        <location evidence="1">Cytoplasm</location>
    </subcellularLocation>
</comment>
<comment type="similarity">
    <text evidence="1">Belongs to the methyltransferase superfamily. RsmJ family.</text>
</comment>
<sequence length="241" mass="27825">MQINISNLDVKNHLDKFIEDRLEYEFCKQDKYLYLENDNLKLHYNNKELFIDFNDSEILNRINPKTKKCSVVQAIEGRSKAKLTILDTTAGLGRDTFTLAARGHTLLTLEKDSYLYLLLKDALQRAQQINYLKEIANRITLINIDSNEYILTTDKSFDCVYVDPMFPPRKKSAKVKQGMQILHQVGFNDEVSNSNLLDNIIQTQISPKAVVKRPINAEFLSNKKPSSQLKGKTNRFDIYSL</sequence>
<name>RSMJ_FRATO</name>
<reference key="1">
    <citation type="journal article" date="2006" name="J. Bacteriol.">
        <title>Chromosome rearrangement and diversification of Francisella tularensis revealed by the type B (OSU18) genome sequence.</title>
        <authorList>
            <person name="Petrosino J.F."/>
            <person name="Xiang Q."/>
            <person name="Karpathy S.E."/>
            <person name="Jiang H."/>
            <person name="Yerrapragada S."/>
            <person name="Liu Y."/>
            <person name="Gioia J."/>
            <person name="Hemphill L."/>
            <person name="Gonzalez A."/>
            <person name="Raghavan T.M."/>
            <person name="Uzman A."/>
            <person name="Fox G.E."/>
            <person name="Highlander S."/>
            <person name="Reichard M."/>
            <person name="Morton R.J."/>
            <person name="Clinkenbeard K.D."/>
            <person name="Weinstock G.M."/>
        </authorList>
    </citation>
    <scope>NUCLEOTIDE SEQUENCE [LARGE SCALE GENOMIC DNA]</scope>
    <source>
        <strain>OSU18</strain>
    </source>
</reference>
<protein>
    <recommendedName>
        <fullName evidence="1">Ribosomal RNA small subunit methyltransferase J</fullName>
        <ecNumber evidence="1">2.1.1.242</ecNumber>
    </recommendedName>
    <alternativeName>
        <fullName evidence="1">16S rRNA m2G1516 methyltransferase</fullName>
    </alternativeName>
    <alternativeName>
        <fullName evidence="1">rRNA (guanine-N(2)-)-methyltransferase</fullName>
    </alternativeName>
</protein>
<organism>
    <name type="scientific">Francisella tularensis subsp. holarctica (strain OSU18)</name>
    <dbReference type="NCBI Taxonomy" id="393011"/>
    <lineage>
        <taxon>Bacteria</taxon>
        <taxon>Pseudomonadati</taxon>
        <taxon>Pseudomonadota</taxon>
        <taxon>Gammaproteobacteria</taxon>
        <taxon>Thiotrichales</taxon>
        <taxon>Francisellaceae</taxon>
        <taxon>Francisella</taxon>
    </lineage>
</organism>
<keyword id="KW-0963">Cytoplasm</keyword>
<keyword id="KW-0489">Methyltransferase</keyword>
<keyword id="KW-0698">rRNA processing</keyword>
<keyword id="KW-0949">S-adenosyl-L-methionine</keyword>
<keyword id="KW-0808">Transferase</keyword>